<sequence>MTPACPLLLSVILSLRLATAFDPAPSACSALASGVLYGAFSLQDLFPTIASGCSWTLENPDPTKYSLYLRFNRQEQVCTHFAPRLLPLDHYLVNFTCLRPGPEEATARAESEVGRPEEEEEEAAAAASGLELCGGSGPFTFLHFDKNFVQLCLSAEPSEAPRLLAPAALAFRFVEVLLINNNNSSQFTCGVLCRWSEECGRAAGRACGFAQPGCSCPGEAGANPATTTSPGPPVAHTLSNALVPGGPAPPAEADLHSGSSNDLFTTEMRYGEEPEEEPKVKTQWPRSADEPGLYMAQTGDPAAEEWSPWSVCSLTCGQGLQVRTRSCVSSPYGTLCSGPLRETRPCNNSATCPVHGVWEEWGSWSLCSRSCGRGSRSRMRTCVPPQHGGKACEGPELQTKLCSMAACPVEGQWLEWGPWGPCSSSCANGTQQRSRKCSVAGPAWATCAGALTDTRECSNLDCPATDGKWGPWNAWSLCSKTCDTGWQRRFRMCQASGTQGYPCEGTGEEVKPCSEKRCPAFHEMCRDEYVMLMTWKRAAAGEIIYNKCPPNASGSASRRCLLSAQGVAYWGLPSFARCISHEYRYLYLSLREHLAKGQRMLAGEGMSQVVRSLQELLARRTYYSGDLLFSVDILRNVTDTFKRATYVPSADDVQRFFQVVSFMVDSENKDKWDDAQQVSPGSVHLLRVVEDFIHLVGDALKAFQSSLIVTDNLVISIQREPISAVSSDITFPMRGRRGMKDWVRHSEDRLFLPKEVLSLSSPGKPATPGAATAGSPGRGRGPGTVPPGPGHAHQRLLPADPEESSSYFVIGAVLYRTLGLILPPPRPPLAVTSRVMTVTVRPPTQPPAEPLITVELSYIINGTTDPHCASWDYSRADTNSGDWNTESCQTLETQAAHTRCQCQHLSTFAVLAQPPKDLTLELAGAPSVPLVIGCAVSCMALLTLLAIYAAFWRFIKSERSIILLNFCLSILASNILILVGQSRVLSKGVCTMTAAFLHFFFLSSFCWVLTEAWQSYLAVIGRMRTRLVRKRFLCLGWGLPALVVAVSVGFTRTKGYGTSSYCWLSLEGGLLYAFVGPAAVIVLVNMLIGIIVFNKLMARDGVSDKSKKQRAGSERCPWASLLLPCSACGAVPSPLLSSASARNAMASLWSSCVVLPLLALTWMSAVLAMTDRRSVLFQALFAVFNSAQGFVITAVHCFLRREVQDVVKCQMGVCRADESEDSPDSCKNGQLQILSDFEKDVDLACQTVLFKEVNTCNPSTITGTLSRLSLDEDEEPKSCLVGPEGGLSFSPLPGNILVPMAASPGLGEPPPPQETNPVYMCGEGGLRQLDLTWIRQSEPGSEGDYMVLPRRTLSLQPGGGGTAGEEAPRARPEGTPRRAAKTVAHTEGYPSFLSVEHSGLGLGPAYGSLQNPYGMTFQPPPPTPSARQVPEPGERSRTMPRTVPGSTMKLGSLERKKLRYSDLDFEKVMHTRKRHSELYHELNQKFHTFDRYRSQSSAKEKPSPPGGRPGLSQHRRHQSWSTFKSMTLGSLPPKPRERLALHRTAAWEPTEPPDGDFQTEV</sequence>
<accession>Q8CGM1</accession>
<accession>B1ASB7</accession>
<accession>B1ASB8</accession>
<accession>B2FDE3</accession>
<accession>Q3TYC8</accession>
<accession>Q3UN11</accession>
<accession>Q3UNE2</accession>
<accession>Q6PGN0</accession>
<comment type="function">
    <text evidence="1 6">Orphan G-protein coupled receptor involved in cell adhesion and probably in cell-cell interactions. Activates NFAT-signaling pathway, a transcription factor, via the G-protein GNAZ. Involved in angiogenesis inhibition (PubMed:12218411).</text>
</comment>
<comment type="activity regulation">
    <text evidence="1">Receptor activity is regulated by proteolytic processing. The long N-terminal has a an inhibitory effect on the constitutive signaling activity. Removal of the N-terminal region induces an increase of the receptor activity.</text>
</comment>
<comment type="subunit">
    <text evidence="1 7 9">Heterodimer of 2 chains generated by proteolytic processing; the large extracellular N-terminal fragment and the membrane-bound C-terminal fragment predominantly remain associated and non-covalently linked. Interacts with GABPB2 (PubMed:16412436). Interacts (via carboxy-terminus) with TAX1BP3. Interacts with GNAZ (By similarity). Interacts with SH3GL2 (PubMed:28891236).</text>
</comment>
<comment type="interaction">
    <interactant intactId="EBI-8014984">
        <id>Q8CGM1</id>
    </interactant>
    <interactant intactId="EBI-618165">
        <id>Q06547</id>
        <label>GABPB1</label>
    </interactant>
    <organismsDiffer>true</organismsDiffer>
    <experiments>3</experiments>
</comment>
<comment type="subcellular location">
    <subcellularLocation>
        <location evidence="1">Cell membrane</location>
        <topology evidence="2">Multi-pass membrane protein</topology>
    </subcellularLocation>
    <subcellularLocation>
        <location evidence="1">Secreted</location>
    </subcellularLocation>
</comment>
<comment type="alternative products">
    <event type="alternative splicing"/>
    <isoform>
        <id>Q8CGM1-1</id>
        <name>1</name>
        <sequence type="displayed"/>
    </isoform>
    <isoform>
        <id>Q8CGM1-2</id>
        <name>2</name>
        <sequence type="described" ref="VSP_019762"/>
    </isoform>
    <isoform>
        <id>Q8CGM1-3</id>
        <name>3</name>
        <sequence type="described" ref="VSP_019763"/>
    </isoform>
</comment>
<comment type="tissue specificity">
    <text evidence="6">Specifically expressed in the brain. The peak level in the brain is observed 10 days after birth.</text>
</comment>
<comment type="developmental stage">
    <text evidence="6">Ubiquitous in embryonic tissues, but expression is acutely down-regulated after birth, except in the brain, to a level that is maintained throughout adulthood.</text>
</comment>
<comment type="induction">
    <text>Down-regulated after hypoxia.</text>
</comment>
<comment type="PTM">
    <text evidence="1">Glycosylated.</text>
</comment>
<comment type="PTM">
    <text evidence="3">Autoproteolytically processed at the GPS region of the GAIN-B domain; this cleavage modulates receptor activity (By similarity). Additionally, furin is involved in the cleavage at another site, in the middle of the extracellular domain, generating a soluble fragment.</text>
</comment>
<comment type="disruption phenotype">
    <text evidence="8">Deficient mice show significant resistance to depression after repeated stress in the social defeat test. Additionally, hippocampal cell proliferation in deficient mice is increased.</text>
</comment>
<comment type="similarity">
    <text evidence="12">Belongs to the G-protein coupled receptor 2 family. Adhesion G-protein coupled receptor (ADGR) subfamily.</text>
</comment>
<keyword id="KW-0025">Alternative splicing</keyword>
<keyword id="KW-1003">Cell membrane</keyword>
<keyword id="KW-1015">Disulfide bond</keyword>
<keyword id="KW-0297">G-protein coupled receptor</keyword>
<keyword id="KW-0325">Glycoprotein</keyword>
<keyword id="KW-0472">Membrane</keyword>
<keyword id="KW-0597">Phosphoprotein</keyword>
<keyword id="KW-0654">Proteoglycan</keyword>
<keyword id="KW-0675">Receptor</keyword>
<keyword id="KW-1185">Reference proteome</keyword>
<keyword id="KW-0677">Repeat</keyword>
<keyword id="KW-0964">Secreted</keyword>
<keyword id="KW-0732">Signal</keyword>
<keyword id="KW-0807">Transducer</keyword>
<keyword id="KW-0812">Transmembrane</keyword>
<keyword id="KW-1133">Transmembrane helix</keyword>
<gene>
    <name type="primary">Adgrb2</name>
    <name type="synonym">Bai2</name>
</gene>
<dbReference type="EMBL" id="AY168407">
    <property type="protein sequence ID" value="AAN86965.1"/>
    <property type="molecule type" value="mRNA"/>
</dbReference>
<dbReference type="EMBL" id="AK144268">
    <property type="protein sequence ID" value="BAE25805.1"/>
    <property type="molecule type" value="mRNA"/>
</dbReference>
<dbReference type="EMBL" id="AK144559">
    <property type="protein sequence ID" value="BAE25937.1"/>
    <property type="molecule type" value="mRNA"/>
</dbReference>
<dbReference type="EMBL" id="AK158735">
    <property type="protein sequence ID" value="BAE34635.1"/>
    <property type="molecule type" value="mRNA"/>
</dbReference>
<dbReference type="EMBL" id="AL626774">
    <property type="status" value="NOT_ANNOTATED_CDS"/>
    <property type="molecule type" value="Genomic_DNA"/>
</dbReference>
<dbReference type="EMBL" id="BC056926">
    <property type="protein sequence ID" value="AAH56926.1"/>
    <property type="molecule type" value="mRNA"/>
</dbReference>
<dbReference type="CCDS" id="CCDS51309.1">
    <molecule id="Q8CGM1-3"/>
</dbReference>
<dbReference type="CCDS" id="CCDS57300.1">
    <molecule id="Q8CGM1-2"/>
</dbReference>
<dbReference type="CCDS" id="CCDS80164.1">
    <molecule id="Q8CGM1-1"/>
</dbReference>
<dbReference type="RefSeq" id="NP_001186625.1">
    <molecule id="Q8CGM1-2"/>
    <property type="nucleotide sequence ID" value="NM_001199696.2"/>
</dbReference>
<dbReference type="RefSeq" id="NP_001277643.1">
    <property type="nucleotide sequence ID" value="NM_001290714.1"/>
</dbReference>
<dbReference type="RefSeq" id="NP_001277644.1">
    <molecule id="Q8CGM1-1"/>
    <property type="nucleotide sequence ID" value="NM_001290715.2"/>
</dbReference>
<dbReference type="RefSeq" id="NP_775094.2">
    <molecule id="Q8CGM1-3"/>
    <property type="nucleotide sequence ID" value="NM_173071.4"/>
</dbReference>
<dbReference type="SMR" id="Q8CGM1"/>
<dbReference type="BioGRID" id="231022">
    <property type="interactions" value="9"/>
</dbReference>
<dbReference type="FunCoup" id="Q8CGM1">
    <property type="interactions" value="1089"/>
</dbReference>
<dbReference type="IntAct" id="Q8CGM1">
    <property type="interactions" value="5"/>
</dbReference>
<dbReference type="MINT" id="Q8CGM1"/>
<dbReference type="STRING" id="10090.ENSMUSP00000101636"/>
<dbReference type="MEROPS" id="P02.029"/>
<dbReference type="GlyConnect" id="2108">
    <property type="glycosylation" value="8 N-Linked glycans (2 sites)"/>
</dbReference>
<dbReference type="GlyCosmos" id="Q8CGM1">
    <property type="glycosylation" value="8 sites, 8 glycans"/>
</dbReference>
<dbReference type="GlyGen" id="Q8CGM1">
    <property type="glycosylation" value="11 sites, 11 N-linked glycans (5 sites)"/>
</dbReference>
<dbReference type="iPTMnet" id="Q8CGM1"/>
<dbReference type="PhosphoSitePlus" id="Q8CGM1"/>
<dbReference type="SwissPalm" id="Q8CGM1"/>
<dbReference type="jPOST" id="Q8CGM1"/>
<dbReference type="PaxDb" id="10090-ENSMUSP00000101638"/>
<dbReference type="ProteomicsDB" id="296126">
    <molecule id="Q8CGM1-1"/>
</dbReference>
<dbReference type="ProteomicsDB" id="296127">
    <molecule id="Q8CGM1-2"/>
</dbReference>
<dbReference type="ProteomicsDB" id="296128">
    <molecule id="Q8CGM1-3"/>
</dbReference>
<dbReference type="Antibodypedia" id="16794">
    <property type="antibodies" value="291 antibodies from 33 providers"/>
</dbReference>
<dbReference type="DNASU" id="230775"/>
<dbReference type="Ensembl" id="ENSMUST00000106015.9">
    <molecule id="Q8CGM1-1"/>
    <property type="protein sequence ID" value="ENSMUSP00000101636.3"/>
    <property type="gene ID" value="ENSMUSG00000028782.15"/>
</dbReference>
<dbReference type="Ensembl" id="ENSMUST00000106017.8">
    <molecule id="Q8CGM1-3"/>
    <property type="protein sequence ID" value="ENSMUSP00000101638.2"/>
    <property type="gene ID" value="ENSMUSG00000028782.15"/>
</dbReference>
<dbReference type="Ensembl" id="ENSMUST00000121049.8">
    <molecule id="Q8CGM1-2"/>
    <property type="protein sequence ID" value="ENSMUSP00000112869.2"/>
    <property type="gene ID" value="ENSMUSG00000028782.15"/>
</dbReference>
<dbReference type="GeneID" id="230775"/>
<dbReference type="KEGG" id="mmu:230775"/>
<dbReference type="UCSC" id="uc008uym.3">
    <molecule id="Q8CGM1-3"/>
    <property type="organism name" value="mouse"/>
</dbReference>
<dbReference type="UCSC" id="uc008uyn.3">
    <molecule id="Q8CGM1-2"/>
    <property type="organism name" value="mouse"/>
</dbReference>
<dbReference type="UCSC" id="uc008uyp.1">
    <molecule id="Q8CGM1-1"/>
    <property type="organism name" value="mouse"/>
</dbReference>
<dbReference type="AGR" id="MGI:2451244"/>
<dbReference type="CTD" id="576"/>
<dbReference type="MGI" id="MGI:2451244">
    <property type="gene designation" value="Adgrb2"/>
</dbReference>
<dbReference type="VEuPathDB" id="HostDB:ENSMUSG00000028782"/>
<dbReference type="eggNOG" id="ENOG502QRKJ">
    <property type="taxonomic scope" value="Eukaryota"/>
</dbReference>
<dbReference type="GeneTree" id="ENSGT00940000160103"/>
<dbReference type="HOGENOM" id="CLU_003751_1_0_1"/>
<dbReference type="InParanoid" id="Q8CGM1"/>
<dbReference type="OMA" id="TDTCPVP"/>
<dbReference type="PhylomeDB" id="Q8CGM1"/>
<dbReference type="TreeFam" id="TF331634"/>
<dbReference type="BioGRID-ORCS" id="230775">
    <property type="hits" value="9 hits in 78 CRISPR screens"/>
</dbReference>
<dbReference type="CD-CODE" id="CE726F99">
    <property type="entry name" value="Postsynaptic density"/>
</dbReference>
<dbReference type="ChiTaRS" id="Adgrb2">
    <property type="organism name" value="mouse"/>
</dbReference>
<dbReference type="PRO" id="PR:Q8CGM1"/>
<dbReference type="Proteomes" id="UP000000589">
    <property type="component" value="Chromosome 4"/>
</dbReference>
<dbReference type="RNAct" id="Q8CGM1">
    <property type="molecule type" value="protein"/>
</dbReference>
<dbReference type="Bgee" id="ENSMUSG00000028782">
    <property type="expression patterns" value="Expressed in primary visual cortex and 135 other cell types or tissues"/>
</dbReference>
<dbReference type="ExpressionAtlas" id="Q8CGM1">
    <property type="expression patterns" value="baseline and differential"/>
</dbReference>
<dbReference type="GO" id="GO:0005576">
    <property type="term" value="C:extracellular region"/>
    <property type="evidence" value="ECO:0007669"/>
    <property type="project" value="UniProtKB-SubCell"/>
</dbReference>
<dbReference type="GO" id="GO:0098978">
    <property type="term" value="C:glutamatergic synapse"/>
    <property type="evidence" value="ECO:0000314"/>
    <property type="project" value="SynGO"/>
</dbReference>
<dbReference type="GO" id="GO:0005886">
    <property type="term" value="C:plasma membrane"/>
    <property type="evidence" value="ECO:0000250"/>
    <property type="project" value="UniProtKB"/>
</dbReference>
<dbReference type="GO" id="GO:0045202">
    <property type="term" value="C:synapse"/>
    <property type="evidence" value="ECO:0000314"/>
    <property type="project" value="SynGO"/>
</dbReference>
<dbReference type="GO" id="GO:0004930">
    <property type="term" value="F:G protein-coupled receptor activity"/>
    <property type="evidence" value="ECO:0000250"/>
    <property type="project" value="UniProtKB"/>
</dbReference>
<dbReference type="GO" id="GO:0033173">
    <property type="term" value="P:calcineurin-NFAT signaling cascade"/>
    <property type="evidence" value="ECO:0000250"/>
    <property type="project" value="UniProtKB"/>
</dbReference>
<dbReference type="GO" id="GO:0007166">
    <property type="term" value="P:cell surface receptor signaling pathway"/>
    <property type="evidence" value="ECO:0007669"/>
    <property type="project" value="InterPro"/>
</dbReference>
<dbReference type="GO" id="GO:0007186">
    <property type="term" value="P:G protein-coupled receptor signaling pathway"/>
    <property type="evidence" value="ECO:0000250"/>
    <property type="project" value="UniProtKB"/>
</dbReference>
<dbReference type="GO" id="GO:0016525">
    <property type="term" value="P:negative regulation of angiogenesis"/>
    <property type="evidence" value="ECO:0007669"/>
    <property type="project" value="InterPro"/>
</dbReference>
<dbReference type="GO" id="GO:0007422">
    <property type="term" value="P:peripheral nervous system development"/>
    <property type="evidence" value="ECO:0000314"/>
    <property type="project" value="MGI"/>
</dbReference>
<dbReference type="GO" id="GO:0051965">
    <property type="term" value="P:positive regulation of synapse assembly"/>
    <property type="evidence" value="ECO:0000314"/>
    <property type="project" value="MGI"/>
</dbReference>
<dbReference type="CDD" id="cd15988">
    <property type="entry name" value="7tmB2_BAI2"/>
    <property type="match status" value="1"/>
</dbReference>
<dbReference type="FunFam" id="1.25.40.610:FF:000002">
    <property type="entry name" value="Adhesion G protein-coupled receptor B2"/>
    <property type="match status" value="1"/>
</dbReference>
<dbReference type="FunFam" id="2.20.100.10:FF:000003">
    <property type="entry name" value="Adhesion G protein-coupled receptor B2"/>
    <property type="match status" value="2"/>
</dbReference>
<dbReference type="FunFam" id="2.20.100.10:FF:000004">
    <property type="entry name" value="Adhesion G protein-coupled receptor B2"/>
    <property type="match status" value="1"/>
</dbReference>
<dbReference type="FunFam" id="2.20.100.10:FF:000012">
    <property type="entry name" value="Adhesion G protein-coupled receptor B2"/>
    <property type="match status" value="1"/>
</dbReference>
<dbReference type="FunFam" id="4.10.1240.10:FF:000002">
    <property type="entry name" value="Adhesion G protein-coupled receptor B2"/>
    <property type="match status" value="1"/>
</dbReference>
<dbReference type="Gene3D" id="1.25.40.610">
    <property type="match status" value="1"/>
</dbReference>
<dbReference type="Gene3D" id="2.60.220.50">
    <property type="match status" value="1"/>
</dbReference>
<dbReference type="Gene3D" id="4.10.1240.10">
    <property type="entry name" value="GPCR, family 2, extracellular hormone receptor domain"/>
    <property type="match status" value="1"/>
</dbReference>
<dbReference type="Gene3D" id="1.20.1070.10">
    <property type="entry name" value="Rhodopsin 7-helix transmembrane proteins"/>
    <property type="match status" value="1"/>
</dbReference>
<dbReference type="Gene3D" id="2.20.100.10">
    <property type="entry name" value="Thrombospondin type-1 (TSP1) repeat"/>
    <property type="match status" value="4"/>
</dbReference>
<dbReference type="InterPro" id="IPR043838">
    <property type="entry name" value="AGRB_N"/>
</dbReference>
<dbReference type="InterPro" id="IPR051867">
    <property type="entry name" value="Angio_Inhib/Adhesion_GPCR"/>
</dbReference>
<dbReference type="InterPro" id="IPR057244">
    <property type="entry name" value="GAIN_B"/>
</dbReference>
<dbReference type="InterPro" id="IPR032471">
    <property type="entry name" value="GAIN_dom_N"/>
</dbReference>
<dbReference type="InterPro" id="IPR046338">
    <property type="entry name" value="GAIN_dom_sf"/>
</dbReference>
<dbReference type="InterPro" id="IPR017981">
    <property type="entry name" value="GPCR_2-like_7TM"/>
</dbReference>
<dbReference type="InterPro" id="IPR008077">
    <property type="entry name" value="GPCR_2_brain_angio_inhib"/>
</dbReference>
<dbReference type="InterPro" id="IPR036445">
    <property type="entry name" value="GPCR_2_extracell_dom_sf"/>
</dbReference>
<dbReference type="InterPro" id="IPR001879">
    <property type="entry name" value="GPCR_2_extracellular_dom"/>
</dbReference>
<dbReference type="InterPro" id="IPR000832">
    <property type="entry name" value="GPCR_2_secretin-like"/>
</dbReference>
<dbReference type="InterPro" id="IPR000203">
    <property type="entry name" value="GPS"/>
</dbReference>
<dbReference type="InterPro" id="IPR000884">
    <property type="entry name" value="TSP1_rpt"/>
</dbReference>
<dbReference type="InterPro" id="IPR036383">
    <property type="entry name" value="TSP1_rpt_sf"/>
</dbReference>
<dbReference type="PANTHER" id="PTHR10239:SF32">
    <property type="entry name" value="ADHESION G PROTEIN-COUPLED RECEPTOR B2"/>
    <property type="match status" value="1"/>
</dbReference>
<dbReference type="PANTHER" id="PTHR10239">
    <property type="entry name" value="ISTHMIN-2"/>
    <property type="match status" value="1"/>
</dbReference>
<dbReference type="Pfam" id="PF00002">
    <property type="entry name" value="7tm_2"/>
    <property type="match status" value="1"/>
</dbReference>
<dbReference type="Pfam" id="PF19188">
    <property type="entry name" value="AGRB_N"/>
    <property type="match status" value="1"/>
</dbReference>
<dbReference type="Pfam" id="PF16489">
    <property type="entry name" value="GAIN"/>
    <property type="match status" value="1"/>
</dbReference>
<dbReference type="Pfam" id="PF01825">
    <property type="entry name" value="GPS"/>
    <property type="match status" value="1"/>
</dbReference>
<dbReference type="Pfam" id="PF00090">
    <property type="entry name" value="TSP_1"/>
    <property type="match status" value="4"/>
</dbReference>
<dbReference type="PRINTS" id="PR01694">
    <property type="entry name" value="BAIPRECURSOR"/>
</dbReference>
<dbReference type="PRINTS" id="PR00249">
    <property type="entry name" value="GPCRSECRETIN"/>
</dbReference>
<dbReference type="SMART" id="SM00303">
    <property type="entry name" value="GPS"/>
    <property type="match status" value="1"/>
</dbReference>
<dbReference type="SMART" id="SM00008">
    <property type="entry name" value="HormR"/>
    <property type="match status" value="1"/>
</dbReference>
<dbReference type="SMART" id="SM00209">
    <property type="entry name" value="TSP1"/>
    <property type="match status" value="4"/>
</dbReference>
<dbReference type="SUPFAM" id="SSF81321">
    <property type="entry name" value="Family A G protein-coupled receptor-like"/>
    <property type="match status" value="1"/>
</dbReference>
<dbReference type="SUPFAM" id="SSF82895">
    <property type="entry name" value="TSP-1 type 1 repeat"/>
    <property type="match status" value="4"/>
</dbReference>
<dbReference type="PROSITE" id="PS50227">
    <property type="entry name" value="G_PROTEIN_RECEP_F2_3"/>
    <property type="match status" value="1"/>
</dbReference>
<dbReference type="PROSITE" id="PS50261">
    <property type="entry name" value="G_PROTEIN_RECEP_F2_4"/>
    <property type="match status" value="1"/>
</dbReference>
<dbReference type="PROSITE" id="PS50221">
    <property type="entry name" value="GAIN_B"/>
    <property type="match status" value="1"/>
</dbReference>
<dbReference type="PROSITE" id="PS50092">
    <property type="entry name" value="TSP1"/>
    <property type="match status" value="4"/>
</dbReference>
<proteinExistence type="evidence at protein level"/>
<reference key="1">
    <citation type="journal article" date="2002" name="J. Cereb. Blood Flow Metab.">
        <title>Expression of brain-specific angiogenesis inhibitor 2 (BAI2) in normal and ischemic brain: involvement of BAI2 in the ischemia-induced brain angiogenesis.</title>
        <authorList>
            <person name="Kee H.J."/>
            <person name="Koh J.T."/>
            <person name="Kim M.Y."/>
            <person name="Ahn K.Y."/>
            <person name="Kim J.K."/>
            <person name="Bae C.S."/>
            <person name="Park S.S."/>
            <person name="Kim K.K."/>
        </authorList>
    </citation>
    <scope>NUCLEOTIDE SEQUENCE [MRNA] (ISOFORM 1)</scope>
    <scope>TISSUE SPECIFICITY</scope>
    <scope>DEVELOPMENTAL STAGE</scope>
    <scope>FUNCTION</scope>
    <source>
        <strain>ICR</strain>
        <tissue>Brain</tissue>
    </source>
</reference>
<reference key="2">
    <citation type="journal article" date="2005" name="Science">
        <title>The transcriptional landscape of the mammalian genome.</title>
        <authorList>
            <person name="Carninci P."/>
            <person name="Kasukawa T."/>
            <person name="Katayama S."/>
            <person name="Gough J."/>
            <person name="Frith M.C."/>
            <person name="Maeda N."/>
            <person name="Oyama R."/>
            <person name="Ravasi T."/>
            <person name="Lenhard B."/>
            <person name="Wells C."/>
            <person name="Kodzius R."/>
            <person name="Shimokawa K."/>
            <person name="Bajic V.B."/>
            <person name="Brenner S.E."/>
            <person name="Batalov S."/>
            <person name="Forrest A.R."/>
            <person name="Zavolan M."/>
            <person name="Davis M.J."/>
            <person name="Wilming L.G."/>
            <person name="Aidinis V."/>
            <person name="Allen J.E."/>
            <person name="Ambesi-Impiombato A."/>
            <person name="Apweiler R."/>
            <person name="Aturaliya R.N."/>
            <person name="Bailey T.L."/>
            <person name="Bansal M."/>
            <person name="Baxter L."/>
            <person name="Beisel K.W."/>
            <person name="Bersano T."/>
            <person name="Bono H."/>
            <person name="Chalk A.M."/>
            <person name="Chiu K.P."/>
            <person name="Choudhary V."/>
            <person name="Christoffels A."/>
            <person name="Clutterbuck D.R."/>
            <person name="Crowe M.L."/>
            <person name="Dalla E."/>
            <person name="Dalrymple B.P."/>
            <person name="de Bono B."/>
            <person name="Della Gatta G."/>
            <person name="di Bernardo D."/>
            <person name="Down T."/>
            <person name="Engstrom P."/>
            <person name="Fagiolini M."/>
            <person name="Faulkner G."/>
            <person name="Fletcher C.F."/>
            <person name="Fukushima T."/>
            <person name="Furuno M."/>
            <person name="Futaki S."/>
            <person name="Gariboldi M."/>
            <person name="Georgii-Hemming P."/>
            <person name="Gingeras T.R."/>
            <person name="Gojobori T."/>
            <person name="Green R.E."/>
            <person name="Gustincich S."/>
            <person name="Harbers M."/>
            <person name="Hayashi Y."/>
            <person name="Hensch T.K."/>
            <person name="Hirokawa N."/>
            <person name="Hill D."/>
            <person name="Huminiecki L."/>
            <person name="Iacono M."/>
            <person name="Ikeo K."/>
            <person name="Iwama A."/>
            <person name="Ishikawa T."/>
            <person name="Jakt M."/>
            <person name="Kanapin A."/>
            <person name="Katoh M."/>
            <person name="Kawasawa Y."/>
            <person name="Kelso J."/>
            <person name="Kitamura H."/>
            <person name="Kitano H."/>
            <person name="Kollias G."/>
            <person name="Krishnan S.P."/>
            <person name="Kruger A."/>
            <person name="Kummerfeld S.K."/>
            <person name="Kurochkin I.V."/>
            <person name="Lareau L.F."/>
            <person name="Lazarevic D."/>
            <person name="Lipovich L."/>
            <person name="Liu J."/>
            <person name="Liuni S."/>
            <person name="McWilliam S."/>
            <person name="Madan Babu M."/>
            <person name="Madera M."/>
            <person name="Marchionni L."/>
            <person name="Matsuda H."/>
            <person name="Matsuzawa S."/>
            <person name="Miki H."/>
            <person name="Mignone F."/>
            <person name="Miyake S."/>
            <person name="Morris K."/>
            <person name="Mottagui-Tabar S."/>
            <person name="Mulder N."/>
            <person name="Nakano N."/>
            <person name="Nakauchi H."/>
            <person name="Ng P."/>
            <person name="Nilsson R."/>
            <person name="Nishiguchi S."/>
            <person name="Nishikawa S."/>
            <person name="Nori F."/>
            <person name="Ohara O."/>
            <person name="Okazaki Y."/>
            <person name="Orlando V."/>
            <person name="Pang K.C."/>
            <person name="Pavan W.J."/>
            <person name="Pavesi G."/>
            <person name="Pesole G."/>
            <person name="Petrovsky N."/>
            <person name="Piazza S."/>
            <person name="Reed J."/>
            <person name="Reid J.F."/>
            <person name="Ring B.Z."/>
            <person name="Ringwald M."/>
            <person name="Rost B."/>
            <person name="Ruan Y."/>
            <person name="Salzberg S.L."/>
            <person name="Sandelin A."/>
            <person name="Schneider C."/>
            <person name="Schoenbach C."/>
            <person name="Sekiguchi K."/>
            <person name="Semple C.A."/>
            <person name="Seno S."/>
            <person name="Sessa L."/>
            <person name="Sheng Y."/>
            <person name="Shibata Y."/>
            <person name="Shimada H."/>
            <person name="Shimada K."/>
            <person name="Silva D."/>
            <person name="Sinclair B."/>
            <person name="Sperling S."/>
            <person name="Stupka E."/>
            <person name="Sugiura K."/>
            <person name="Sultana R."/>
            <person name="Takenaka Y."/>
            <person name="Taki K."/>
            <person name="Tammoja K."/>
            <person name="Tan S.L."/>
            <person name="Tang S."/>
            <person name="Taylor M.S."/>
            <person name="Tegner J."/>
            <person name="Teichmann S.A."/>
            <person name="Ueda H.R."/>
            <person name="van Nimwegen E."/>
            <person name="Verardo R."/>
            <person name="Wei C.L."/>
            <person name="Yagi K."/>
            <person name="Yamanishi H."/>
            <person name="Zabarovsky E."/>
            <person name="Zhu S."/>
            <person name="Zimmer A."/>
            <person name="Hide W."/>
            <person name="Bult C."/>
            <person name="Grimmond S.M."/>
            <person name="Teasdale R.D."/>
            <person name="Liu E.T."/>
            <person name="Brusic V."/>
            <person name="Quackenbush J."/>
            <person name="Wahlestedt C."/>
            <person name="Mattick J.S."/>
            <person name="Hume D.A."/>
            <person name="Kai C."/>
            <person name="Sasaki D."/>
            <person name="Tomaru Y."/>
            <person name="Fukuda S."/>
            <person name="Kanamori-Katayama M."/>
            <person name="Suzuki M."/>
            <person name="Aoki J."/>
            <person name="Arakawa T."/>
            <person name="Iida J."/>
            <person name="Imamura K."/>
            <person name="Itoh M."/>
            <person name="Kato T."/>
            <person name="Kawaji H."/>
            <person name="Kawagashira N."/>
            <person name="Kawashima T."/>
            <person name="Kojima M."/>
            <person name="Kondo S."/>
            <person name="Konno H."/>
            <person name="Nakano K."/>
            <person name="Ninomiya N."/>
            <person name="Nishio T."/>
            <person name="Okada M."/>
            <person name="Plessy C."/>
            <person name="Shibata K."/>
            <person name="Shiraki T."/>
            <person name="Suzuki S."/>
            <person name="Tagami M."/>
            <person name="Waki K."/>
            <person name="Watahiki A."/>
            <person name="Okamura-Oho Y."/>
            <person name="Suzuki H."/>
            <person name="Kawai J."/>
            <person name="Hayashizaki Y."/>
        </authorList>
    </citation>
    <scope>NUCLEOTIDE SEQUENCE [LARGE SCALE MRNA] (ISOFORM 2)</scope>
    <source>
        <strain>C57BL/6J</strain>
        <tissue>Diencephalon</tissue>
        <tissue>Visual cortex</tissue>
    </source>
</reference>
<reference key="3">
    <citation type="journal article" date="2009" name="PLoS Biol.">
        <title>Lineage-specific biology revealed by a finished genome assembly of the mouse.</title>
        <authorList>
            <person name="Church D.M."/>
            <person name="Goodstadt L."/>
            <person name="Hillier L.W."/>
            <person name="Zody M.C."/>
            <person name="Goldstein S."/>
            <person name="She X."/>
            <person name="Bult C.J."/>
            <person name="Agarwala R."/>
            <person name="Cherry J.L."/>
            <person name="DiCuccio M."/>
            <person name="Hlavina W."/>
            <person name="Kapustin Y."/>
            <person name="Meric P."/>
            <person name="Maglott D."/>
            <person name="Birtle Z."/>
            <person name="Marques A.C."/>
            <person name="Graves T."/>
            <person name="Zhou S."/>
            <person name="Teague B."/>
            <person name="Potamousis K."/>
            <person name="Churas C."/>
            <person name="Place M."/>
            <person name="Herschleb J."/>
            <person name="Runnheim R."/>
            <person name="Forrest D."/>
            <person name="Amos-Landgraf J."/>
            <person name="Schwartz D.C."/>
            <person name="Cheng Z."/>
            <person name="Lindblad-Toh K."/>
            <person name="Eichler E.E."/>
            <person name="Ponting C.P."/>
        </authorList>
    </citation>
    <scope>NUCLEOTIDE SEQUENCE [LARGE SCALE GENOMIC DNA]</scope>
    <source>
        <strain>C57BL/6J</strain>
    </source>
</reference>
<reference key="4">
    <citation type="journal article" date="2004" name="Genome Res.">
        <title>The status, quality, and expansion of the NIH full-length cDNA project: the Mammalian Gene Collection (MGC).</title>
        <authorList>
            <consortium name="The MGC Project Team"/>
        </authorList>
    </citation>
    <scope>NUCLEOTIDE SEQUENCE [LARGE SCALE MRNA] (ISOFORM 3)</scope>
    <source>
        <strain>C57BL/6J</strain>
        <tissue>Brain</tissue>
    </source>
</reference>
<reference key="5">
    <citation type="journal article" date="2006" name="FEBS Lett.">
        <title>Brain-specific angiogenesis inhibitor 2 regulates VEGF through GABP that acts as a transcriptional repressor.</title>
        <authorList>
            <person name="Jeong B.C."/>
            <person name="Kim M.Y."/>
            <person name="Lee J.H."/>
            <person name="Kee H.J."/>
            <person name="Kho D.H."/>
            <person name="Han K.E."/>
            <person name="Qian Y.R."/>
            <person name="Kim J.K."/>
            <person name="Kim K.K."/>
        </authorList>
    </citation>
    <scope>INTERACTION WITH GABPB2</scope>
</reference>
<reference key="6">
    <citation type="journal article" date="2008" name="J. Proteome Res.">
        <title>Large-scale identification and evolution indexing of tyrosine phosphorylation sites from murine brain.</title>
        <authorList>
            <person name="Ballif B.A."/>
            <person name="Carey G.R."/>
            <person name="Sunyaev S.R."/>
            <person name="Gygi S.P."/>
        </authorList>
    </citation>
    <scope>PHOSPHORYLATION [LARGE SCALE ANALYSIS] AT TYR-1345</scope>
    <scope>IDENTIFICATION BY MASS SPECTROMETRY [LARGE SCALE ANALYSIS]</scope>
    <source>
        <tissue>Brain</tissue>
    </source>
</reference>
<reference key="7">
    <citation type="journal article" date="2010" name="Cell">
        <title>A tissue-specific atlas of mouse protein phosphorylation and expression.</title>
        <authorList>
            <person name="Huttlin E.L."/>
            <person name="Jedrychowski M.P."/>
            <person name="Elias J.E."/>
            <person name="Goswami T."/>
            <person name="Rad R."/>
            <person name="Beausoleil S.A."/>
            <person name="Villen J."/>
            <person name="Haas W."/>
            <person name="Sowa M.E."/>
            <person name="Gygi S.P."/>
        </authorList>
    </citation>
    <scope>IDENTIFICATION BY MASS SPECTROMETRY [LARGE SCALE ANALYSIS]</scope>
    <source>
        <tissue>Brain</tissue>
    </source>
</reference>
<reference key="8">
    <citation type="journal article" date="2011" name="J. Physiol. Sci.">
        <title>Antidepressant-like behavior in brain-specific angiogenesis inhibitor 2-deficient mice.</title>
        <authorList>
            <person name="Okajima D."/>
            <person name="Kudo G."/>
            <person name="Yokota H."/>
        </authorList>
    </citation>
    <scope>DISRUPTION PHENOTYPE</scope>
</reference>
<reference key="9">
    <citation type="journal article" date="2017" name="Hum. Mutat.">
        <title>A disease-associated mutation in the adhesion GPCR BAI2 (ADGRB2) increases receptor signaling activity.</title>
        <authorList>
            <person name="Purcell R.H."/>
            <person name="Toro C."/>
            <person name="Gahl W.A."/>
            <person name="Hall R.A."/>
        </authorList>
    </citation>
    <scope>INTERACTION WITH SH3GL2</scope>
</reference>
<protein>
    <recommendedName>
        <fullName>Adhesion G protein-coupled receptor B2</fullName>
    </recommendedName>
    <alternativeName>
        <fullName>Brain-specific angiogenesis inhibitor 2</fullName>
    </alternativeName>
</protein>
<organism>
    <name type="scientific">Mus musculus</name>
    <name type="common">Mouse</name>
    <dbReference type="NCBI Taxonomy" id="10090"/>
    <lineage>
        <taxon>Eukaryota</taxon>
        <taxon>Metazoa</taxon>
        <taxon>Chordata</taxon>
        <taxon>Craniata</taxon>
        <taxon>Vertebrata</taxon>
        <taxon>Euteleostomi</taxon>
        <taxon>Mammalia</taxon>
        <taxon>Eutheria</taxon>
        <taxon>Euarchontoglires</taxon>
        <taxon>Glires</taxon>
        <taxon>Rodentia</taxon>
        <taxon>Myomorpha</taxon>
        <taxon>Muroidea</taxon>
        <taxon>Muridae</taxon>
        <taxon>Murinae</taxon>
        <taxon>Mus</taxon>
        <taxon>Mus</taxon>
    </lineage>
</organism>
<feature type="signal peptide" evidence="2">
    <location>
        <begin position="1"/>
        <end position="20"/>
    </location>
</feature>
<feature type="chain" id="PRO_0000245613" description="Adhesion G protein-coupled receptor B2">
    <location>
        <begin position="21"/>
        <end position="1561"/>
    </location>
</feature>
<feature type="topological domain" description="Extracellular" evidence="12">
    <location>
        <begin position="21"/>
        <end position="930"/>
    </location>
</feature>
<feature type="transmembrane region" description="Helical; Name=1" evidence="2">
    <location>
        <begin position="931"/>
        <end position="951"/>
    </location>
</feature>
<feature type="topological domain" description="Cytoplasmic" evidence="12">
    <location>
        <begin position="952"/>
        <end position="959"/>
    </location>
</feature>
<feature type="transmembrane region" description="Helical; Name=2" evidence="2">
    <location>
        <begin position="960"/>
        <end position="980"/>
    </location>
</feature>
<feature type="topological domain" description="Extracellular" evidence="12">
    <location>
        <begin position="981"/>
        <end position="988"/>
    </location>
</feature>
<feature type="transmembrane region" description="Helical; Name=3" evidence="2">
    <location>
        <begin position="989"/>
        <end position="1009"/>
    </location>
</feature>
<feature type="topological domain" description="Cytoplasmic" evidence="12">
    <location>
        <begin position="1010"/>
        <end position="1030"/>
    </location>
</feature>
<feature type="transmembrane region" description="Helical; Name=4" evidence="2">
    <location>
        <begin position="1031"/>
        <end position="1051"/>
    </location>
</feature>
<feature type="topological domain" description="Extracellular" evidence="12">
    <location>
        <begin position="1052"/>
        <end position="1072"/>
    </location>
</feature>
<feature type="transmembrane region" description="Helical; Name=5" evidence="2">
    <location>
        <begin position="1073"/>
        <end position="1093"/>
    </location>
</feature>
<feature type="topological domain" description="Cytoplasmic" evidence="12">
    <location>
        <begin position="1094"/>
        <end position="1115"/>
    </location>
</feature>
<feature type="transmembrane region" description="Helical; Name=6" evidence="2">
    <location>
        <begin position="1116"/>
        <end position="1136"/>
    </location>
</feature>
<feature type="topological domain" description="Extracellular" evidence="12">
    <location>
        <begin position="1137"/>
        <end position="1147"/>
    </location>
</feature>
<feature type="transmembrane region" description="Helical; Name=7" evidence="2">
    <location>
        <begin position="1148"/>
        <end position="1168"/>
    </location>
</feature>
<feature type="topological domain" description="Cytoplasmic" evidence="12">
    <location>
        <begin position="1169"/>
        <end position="1561"/>
    </location>
</feature>
<feature type="domain" description="TSP type-1 1" evidence="4">
    <location>
        <begin position="300"/>
        <end position="353"/>
    </location>
</feature>
<feature type="domain" description="TSP type-1 2" evidence="4">
    <location>
        <begin position="355"/>
        <end position="408"/>
    </location>
</feature>
<feature type="domain" description="TSP type-1 3" evidence="4">
    <location>
        <begin position="410"/>
        <end position="463"/>
    </location>
</feature>
<feature type="domain" description="TSP type-1 4" evidence="4">
    <location>
        <begin position="466"/>
        <end position="519"/>
    </location>
</feature>
<feature type="domain" description="GAIN-B" evidence="3">
    <location>
        <begin position="748"/>
        <end position="918"/>
    </location>
</feature>
<feature type="region of interest" description="Disordered" evidence="5">
    <location>
        <begin position="757"/>
        <end position="797"/>
    </location>
</feature>
<feature type="region of interest" description="GPS" evidence="3">
    <location>
        <begin position="868"/>
        <end position="918"/>
    </location>
</feature>
<feature type="region of interest" description="Disordered" evidence="5">
    <location>
        <begin position="1355"/>
        <end position="1377"/>
    </location>
</feature>
<feature type="region of interest" description="Disordered" evidence="5">
    <location>
        <begin position="1417"/>
        <end position="1447"/>
    </location>
</feature>
<feature type="region of interest" description="Disordered" evidence="5">
    <location>
        <begin position="1491"/>
        <end position="1561"/>
    </location>
</feature>
<feature type="compositionally biased region" description="Low complexity" evidence="5">
    <location>
        <begin position="760"/>
        <end position="775"/>
    </location>
</feature>
<feature type="compositionally biased region" description="Basic and acidic residues" evidence="5">
    <location>
        <begin position="1366"/>
        <end position="1376"/>
    </location>
</feature>
<feature type="compositionally biased region" description="Basic and acidic residues" evidence="5">
    <location>
        <begin position="1491"/>
        <end position="1502"/>
    </location>
</feature>
<feature type="compositionally biased region" description="Polar residues" evidence="5">
    <location>
        <begin position="1519"/>
        <end position="1528"/>
    </location>
</feature>
<feature type="compositionally biased region" description="Acidic residues" evidence="5">
    <location>
        <begin position="1551"/>
        <end position="1561"/>
    </location>
</feature>
<feature type="site" description="Cleavage; by furin" evidence="1">
    <location>
        <begin position="287"/>
        <end position="288"/>
    </location>
</feature>
<feature type="site" description="Cleavage; by autolysis" evidence="3">
    <location>
        <begin position="905"/>
        <end position="906"/>
    </location>
</feature>
<feature type="modified residue" description="Phosphotyrosine" evidence="13">
    <location>
        <position position="1345"/>
    </location>
</feature>
<feature type="glycosylation site" description="N-linked (GlcNAc...) asparagine" evidence="2">
    <location>
        <position position="94"/>
    </location>
</feature>
<feature type="glycosylation site" description="N-linked (GlcNAc...) asparagine" evidence="2">
    <location>
        <position position="182"/>
    </location>
</feature>
<feature type="glycosylation site" description="N-linked (GlcNAc...) asparagine" evidence="2">
    <location>
        <position position="183"/>
    </location>
</feature>
<feature type="glycosylation site" description="O-linked (Xyl...) (chondroitin sulfate) serine" evidence="1">
    <location>
        <position position="257"/>
    </location>
</feature>
<feature type="glycosylation site" description="N-linked (GlcNAc...) asparagine" evidence="2">
    <location>
        <position position="347"/>
    </location>
</feature>
<feature type="glycosylation site" description="N-linked (GlcNAc...) asparagine" evidence="2">
    <location>
        <position position="428"/>
    </location>
</feature>
<feature type="glycosylation site" description="N-linked (GlcNAc...) asparagine" evidence="2">
    <location>
        <position position="551"/>
    </location>
</feature>
<feature type="glycosylation site" description="N-linked (GlcNAc...) asparagine" evidence="2">
    <location>
        <position position="636"/>
    </location>
</feature>
<feature type="glycosylation site" description="N-linked (GlcNAc...) asparagine" evidence="2">
    <location>
        <position position="861"/>
    </location>
</feature>
<feature type="disulfide bond" evidence="4">
    <location>
        <begin position="312"/>
        <end position="346"/>
    </location>
</feature>
<feature type="disulfide bond" evidence="4">
    <location>
        <begin position="316"/>
        <end position="352"/>
    </location>
</feature>
<feature type="disulfide bond" evidence="4">
    <location>
        <begin position="327"/>
        <end position="336"/>
    </location>
</feature>
<feature type="disulfide bond" evidence="4">
    <location>
        <begin position="367"/>
        <end position="402"/>
    </location>
</feature>
<feature type="disulfide bond" evidence="4">
    <location>
        <begin position="371"/>
        <end position="407"/>
    </location>
</feature>
<feature type="disulfide bond" evidence="4">
    <location>
        <begin position="382"/>
        <end position="392"/>
    </location>
</feature>
<feature type="disulfide bond" evidence="4">
    <location>
        <begin position="422"/>
        <end position="457"/>
    </location>
</feature>
<feature type="disulfide bond" evidence="4">
    <location>
        <begin position="426"/>
        <end position="462"/>
    </location>
</feature>
<feature type="disulfide bond" evidence="4">
    <location>
        <begin position="437"/>
        <end position="447"/>
    </location>
</feature>
<feature type="disulfide bond" evidence="4">
    <location>
        <begin position="478"/>
        <end position="513"/>
    </location>
</feature>
<feature type="disulfide bond" evidence="4">
    <location>
        <begin position="482"/>
        <end position="518"/>
    </location>
</feature>
<feature type="disulfide bond" evidence="4">
    <location>
        <begin position="493"/>
        <end position="503"/>
    </location>
</feature>
<feature type="disulfide bond" evidence="4">
    <location>
        <begin position="525"/>
        <end position="560"/>
    </location>
</feature>
<feature type="disulfide bond" evidence="4">
    <location>
        <begin position="548"/>
        <end position="578"/>
    </location>
</feature>
<feature type="disulfide bond" evidence="3">
    <location>
        <begin position="868"/>
        <end position="900"/>
    </location>
</feature>
<feature type="disulfide bond" evidence="3">
    <location>
        <begin position="888"/>
        <end position="902"/>
    </location>
</feature>
<feature type="splice variant" id="VSP_019762" description="In isoform 2." evidence="11">
    <location>
        <begin position="299"/>
        <end position="353"/>
    </location>
</feature>
<feature type="splice variant" id="VSP_019763" description="In isoform 3." evidence="10">
    <original>SERCPWASLLLPCSACGAVPSPLLSSASARNAM</original>
    <variation>RLSWNLWGYGSQLCLFPKLPR</variation>
    <location>
        <begin position="1113"/>
        <end position="1145"/>
    </location>
</feature>
<feature type="sequence conflict" description="In Ref. 1; AAN86965." evidence="12" ref="1">
    <original>P</original>
    <variation>L</variation>
    <location>
        <position position="116"/>
    </location>
</feature>
<feature type="sequence conflict" description="In Ref. 1; AAN86965." evidence="12" ref="1">
    <location>
        <position position="122"/>
    </location>
</feature>
<feature type="sequence conflict" description="In Ref. 1; AAN86965." evidence="12" ref="1">
    <original>Q</original>
    <variation>K</variation>
    <location>
        <position position="386"/>
    </location>
</feature>
<feature type="sequence conflict" description="In Ref. 2; BAE34635." evidence="12" ref="2">
    <original>R</original>
    <variation>G</variation>
    <location>
        <position position="526"/>
    </location>
</feature>
<feature type="sequence conflict" description="In Ref. 2; BAE34635." evidence="12" ref="2">
    <original>D</original>
    <variation>G</variation>
    <location>
        <position position="674"/>
    </location>
</feature>
<feature type="sequence conflict" description="In Ref. 2; BAE34635." evidence="12" ref="2">
    <original>A</original>
    <variation>V</variation>
    <location>
        <position position="1179"/>
    </location>
</feature>
<feature type="sequence conflict" description="In Ref. 2; BAE25937." evidence="12" ref="2">
    <original>N</original>
    <variation>D</variation>
    <location>
        <position position="1316"/>
    </location>
</feature>
<feature type="sequence conflict" description="In Ref. 2; BAE25937/BAE25805." evidence="12" ref="2">
    <location>
        <position position="1467"/>
    </location>
</feature>
<feature type="sequence conflict" description="In Ref. 1; AAN86965." evidence="12" ref="1">
    <original>T</original>
    <variation>P</variation>
    <location>
        <position position="1550"/>
    </location>
</feature>
<name>AGRB2_MOUSE</name>
<evidence type="ECO:0000250" key="1">
    <source>
        <dbReference type="UniProtKB" id="O60241"/>
    </source>
</evidence>
<evidence type="ECO:0000255" key="2"/>
<evidence type="ECO:0000255" key="3">
    <source>
        <dbReference type="PROSITE-ProRule" id="PRU00098"/>
    </source>
</evidence>
<evidence type="ECO:0000255" key="4">
    <source>
        <dbReference type="PROSITE-ProRule" id="PRU00210"/>
    </source>
</evidence>
<evidence type="ECO:0000256" key="5">
    <source>
        <dbReference type="SAM" id="MobiDB-lite"/>
    </source>
</evidence>
<evidence type="ECO:0000269" key="6">
    <source>
    </source>
</evidence>
<evidence type="ECO:0000269" key="7">
    <source>
    </source>
</evidence>
<evidence type="ECO:0000269" key="8">
    <source>
    </source>
</evidence>
<evidence type="ECO:0000269" key="9">
    <source>
    </source>
</evidence>
<evidence type="ECO:0000303" key="10">
    <source>
    </source>
</evidence>
<evidence type="ECO:0000303" key="11">
    <source>
    </source>
</evidence>
<evidence type="ECO:0000305" key="12"/>
<evidence type="ECO:0007744" key="13">
    <source>
    </source>
</evidence>